<sequence>MSEYKDTLNLPETGFPMRGDLAKREPEMLQRWYQEDLYGAIRQAKKGKKSFVLHDGPPYANGDIHIGHALNKILKDVIIKSKTLSGFDAPYIPGWDCHGLPIELMVEKKVGKPGQKVTAAEFREKCREYAAGQVEGQKESFKRLGILGEWDKPYRTMDFVTEANIIRALGKIADNGHLLKGFKPVHWCTDCGSALAEAEVEYKNKVSPSIDVRFKAADEAAVLAKFGLAAGHEGKGDVSIVIWTTTPWTLPANRAVCLRADLEYVLIQVEGEQPERIIVASELAKSVMDRAGIEHFHNLGFATGADLELVQFQHPFYSFTVPAILGDHVTTDSGTGVVHTAPGHGQEDFAVGQQYGLEVANPVGSNGVYLPDTELFAGQHVFKANDSVLEVLKEKGALLHHHAYEHSYPHCWRHKTPIIFRATPQWFVSMEQAGLREQALTAIKGVHWMPDWGQSRIEGMVAGRPEWCISRQRTWGVPIALFVHKETAELHPNSADLIEKVAQLVEQKGIQAWWDLDTAELLGAEDAANYEKVLDTLDVWFDSGVTHSAVVDARQEFNGAEADMYLEGSDQHRGWFQSSLISSVAMKGKAPYKEVLTHGFVVDGQGRKMSKSIGNVVAPQDVTNKLGADILRLWVASTDYTGEVAVSDEILKRSADAYRRIRNTARFFLANLNGFNPTTDIIPVEDMVALDRWAVGRALAAQQEIIQAYQDYNLHAVVQRLMNFCSIEMGSFYLDVIKDRQYTAKRGGHAQRSCQTALFFIVEALVRWMAPIMSFTADEIWNAMPAQQADGSARDKFVFTTEWFDGLFGLAEGEELNNAFWNDIQKVRGSVNKLLENARNEKLIGGSLQAELVLFADDSLASKLAKLGDELRFVLLTSKAVVKPLAEKSEAAQATDIDGLFVQVNKTEAEKCDRCWHHTPDVGTIAGHTTICGRCVSNVEGEGEVRKFA</sequence>
<comment type="function">
    <text evidence="1">Catalyzes the attachment of isoleucine to tRNA(Ile). As IleRS can inadvertently accommodate and process structurally similar amino acids such as valine, to avoid such errors it has two additional distinct tRNA(Ile)-dependent editing activities. One activity is designated as 'pretransfer' editing and involves the hydrolysis of activated Val-AMP. The other activity is designated 'posttransfer' editing and involves deacylation of mischarged Val-tRNA(Ile).</text>
</comment>
<comment type="catalytic activity">
    <reaction evidence="1">
        <text>tRNA(Ile) + L-isoleucine + ATP = L-isoleucyl-tRNA(Ile) + AMP + diphosphate</text>
        <dbReference type="Rhea" id="RHEA:11060"/>
        <dbReference type="Rhea" id="RHEA-COMP:9666"/>
        <dbReference type="Rhea" id="RHEA-COMP:9695"/>
        <dbReference type="ChEBI" id="CHEBI:30616"/>
        <dbReference type="ChEBI" id="CHEBI:33019"/>
        <dbReference type="ChEBI" id="CHEBI:58045"/>
        <dbReference type="ChEBI" id="CHEBI:78442"/>
        <dbReference type="ChEBI" id="CHEBI:78528"/>
        <dbReference type="ChEBI" id="CHEBI:456215"/>
        <dbReference type="EC" id="6.1.1.5"/>
    </reaction>
</comment>
<comment type="cofactor">
    <cofactor evidence="1">
        <name>Zn(2+)</name>
        <dbReference type="ChEBI" id="CHEBI:29105"/>
    </cofactor>
    <text evidence="1">Binds 1 zinc ion per subunit.</text>
</comment>
<comment type="subunit">
    <text evidence="1">Monomer.</text>
</comment>
<comment type="subcellular location">
    <subcellularLocation>
        <location evidence="1">Cytoplasm</location>
    </subcellularLocation>
</comment>
<comment type="domain">
    <text evidence="1">IleRS has two distinct active sites: one for aminoacylation and one for editing. The misactivated valine is translocated from the active site to the editing site, which sterically excludes the correctly activated isoleucine. The single editing site contains two valyl binding pockets, one specific for each substrate (Val-AMP or Val-tRNA(Ile)).</text>
</comment>
<comment type="similarity">
    <text evidence="1">Belongs to the class-I aminoacyl-tRNA synthetase family. IleS type 1 subfamily.</text>
</comment>
<evidence type="ECO:0000255" key="1">
    <source>
        <dbReference type="HAMAP-Rule" id="MF_02002"/>
    </source>
</evidence>
<name>SYI_VIBCM</name>
<gene>
    <name evidence="1" type="primary">ileS</name>
    <name type="ordered locus">VCM66_0640</name>
</gene>
<reference key="1">
    <citation type="journal article" date="2008" name="PLoS ONE">
        <title>A recalibrated molecular clock and independent origins for the cholera pandemic clones.</title>
        <authorList>
            <person name="Feng L."/>
            <person name="Reeves P.R."/>
            <person name="Lan R."/>
            <person name="Ren Y."/>
            <person name="Gao C."/>
            <person name="Zhou Z."/>
            <person name="Ren Y."/>
            <person name="Cheng J."/>
            <person name="Wang W."/>
            <person name="Wang J."/>
            <person name="Qian W."/>
            <person name="Li D."/>
            <person name="Wang L."/>
        </authorList>
    </citation>
    <scope>NUCLEOTIDE SEQUENCE [LARGE SCALE GENOMIC DNA]</scope>
    <source>
        <strain>M66-2</strain>
    </source>
</reference>
<keyword id="KW-0030">Aminoacyl-tRNA synthetase</keyword>
<keyword id="KW-0067">ATP-binding</keyword>
<keyword id="KW-0963">Cytoplasm</keyword>
<keyword id="KW-0436">Ligase</keyword>
<keyword id="KW-0479">Metal-binding</keyword>
<keyword id="KW-0547">Nucleotide-binding</keyword>
<keyword id="KW-0648">Protein biosynthesis</keyword>
<keyword id="KW-0862">Zinc</keyword>
<proteinExistence type="inferred from homology"/>
<organism>
    <name type="scientific">Vibrio cholerae serotype O1 (strain M66-2)</name>
    <dbReference type="NCBI Taxonomy" id="579112"/>
    <lineage>
        <taxon>Bacteria</taxon>
        <taxon>Pseudomonadati</taxon>
        <taxon>Pseudomonadota</taxon>
        <taxon>Gammaproteobacteria</taxon>
        <taxon>Vibrionales</taxon>
        <taxon>Vibrionaceae</taxon>
        <taxon>Vibrio</taxon>
    </lineage>
</organism>
<accession>C3LST7</accession>
<protein>
    <recommendedName>
        <fullName evidence="1">Isoleucine--tRNA ligase</fullName>
        <ecNumber evidence="1">6.1.1.5</ecNumber>
    </recommendedName>
    <alternativeName>
        <fullName evidence="1">Isoleucyl-tRNA synthetase</fullName>
        <shortName evidence="1">IleRS</shortName>
    </alternativeName>
</protein>
<dbReference type="EC" id="6.1.1.5" evidence="1"/>
<dbReference type="EMBL" id="CP001233">
    <property type="protein sequence ID" value="ACP04963.1"/>
    <property type="molecule type" value="Genomic_DNA"/>
</dbReference>
<dbReference type="RefSeq" id="WP_000006088.1">
    <property type="nucleotide sequence ID" value="NC_012578.1"/>
</dbReference>
<dbReference type="SMR" id="C3LST7"/>
<dbReference type="KEGG" id="vcm:VCM66_0640"/>
<dbReference type="HOGENOM" id="CLU_001493_7_0_6"/>
<dbReference type="Proteomes" id="UP000001217">
    <property type="component" value="Chromosome I"/>
</dbReference>
<dbReference type="GO" id="GO:0005829">
    <property type="term" value="C:cytosol"/>
    <property type="evidence" value="ECO:0007669"/>
    <property type="project" value="TreeGrafter"/>
</dbReference>
<dbReference type="GO" id="GO:0002161">
    <property type="term" value="F:aminoacyl-tRNA deacylase activity"/>
    <property type="evidence" value="ECO:0007669"/>
    <property type="project" value="InterPro"/>
</dbReference>
<dbReference type="GO" id="GO:0005524">
    <property type="term" value="F:ATP binding"/>
    <property type="evidence" value="ECO:0007669"/>
    <property type="project" value="UniProtKB-UniRule"/>
</dbReference>
<dbReference type="GO" id="GO:0004822">
    <property type="term" value="F:isoleucine-tRNA ligase activity"/>
    <property type="evidence" value="ECO:0007669"/>
    <property type="project" value="UniProtKB-UniRule"/>
</dbReference>
<dbReference type="GO" id="GO:0000049">
    <property type="term" value="F:tRNA binding"/>
    <property type="evidence" value="ECO:0007669"/>
    <property type="project" value="InterPro"/>
</dbReference>
<dbReference type="GO" id="GO:0008270">
    <property type="term" value="F:zinc ion binding"/>
    <property type="evidence" value="ECO:0007669"/>
    <property type="project" value="UniProtKB-UniRule"/>
</dbReference>
<dbReference type="GO" id="GO:0006428">
    <property type="term" value="P:isoleucyl-tRNA aminoacylation"/>
    <property type="evidence" value="ECO:0007669"/>
    <property type="project" value="UniProtKB-UniRule"/>
</dbReference>
<dbReference type="CDD" id="cd07960">
    <property type="entry name" value="Anticodon_Ia_Ile_BEm"/>
    <property type="match status" value="1"/>
</dbReference>
<dbReference type="CDD" id="cd00818">
    <property type="entry name" value="IleRS_core"/>
    <property type="match status" value="1"/>
</dbReference>
<dbReference type="FunFam" id="1.10.730.20:FF:000001">
    <property type="entry name" value="Isoleucine--tRNA ligase"/>
    <property type="match status" value="1"/>
</dbReference>
<dbReference type="FunFam" id="3.40.50.620:FF:000048">
    <property type="entry name" value="Isoleucine--tRNA ligase"/>
    <property type="match status" value="1"/>
</dbReference>
<dbReference type="FunFam" id="3.40.50.620:FF:000168">
    <property type="entry name" value="Isoleucine--tRNA ligase"/>
    <property type="match status" value="1"/>
</dbReference>
<dbReference type="Gene3D" id="1.10.730.20">
    <property type="match status" value="1"/>
</dbReference>
<dbReference type="Gene3D" id="3.40.50.620">
    <property type="entry name" value="HUPs"/>
    <property type="match status" value="2"/>
</dbReference>
<dbReference type="Gene3D" id="1.10.10.830">
    <property type="entry name" value="Ile-tRNA synthetase CP2 domain-like"/>
    <property type="match status" value="1"/>
</dbReference>
<dbReference type="HAMAP" id="MF_02002">
    <property type="entry name" value="Ile_tRNA_synth_type1"/>
    <property type="match status" value="1"/>
</dbReference>
<dbReference type="InterPro" id="IPR001412">
    <property type="entry name" value="aa-tRNA-synth_I_CS"/>
</dbReference>
<dbReference type="InterPro" id="IPR002300">
    <property type="entry name" value="aa-tRNA-synth_Ia"/>
</dbReference>
<dbReference type="InterPro" id="IPR033708">
    <property type="entry name" value="Anticodon_Ile_BEm"/>
</dbReference>
<dbReference type="InterPro" id="IPR002301">
    <property type="entry name" value="Ile-tRNA-ligase"/>
</dbReference>
<dbReference type="InterPro" id="IPR023585">
    <property type="entry name" value="Ile-tRNA-ligase_type1"/>
</dbReference>
<dbReference type="InterPro" id="IPR050081">
    <property type="entry name" value="Ile-tRNA_ligase"/>
</dbReference>
<dbReference type="InterPro" id="IPR013155">
    <property type="entry name" value="M/V/L/I-tRNA-synth_anticd-bd"/>
</dbReference>
<dbReference type="InterPro" id="IPR014729">
    <property type="entry name" value="Rossmann-like_a/b/a_fold"/>
</dbReference>
<dbReference type="InterPro" id="IPR009080">
    <property type="entry name" value="tRNAsynth_Ia_anticodon-bd"/>
</dbReference>
<dbReference type="InterPro" id="IPR009008">
    <property type="entry name" value="Val/Leu/Ile-tRNA-synth_edit"/>
</dbReference>
<dbReference type="InterPro" id="IPR010663">
    <property type="entry name" value="Znf_FPG/IleRS"/>
</dbReference>
<dbReference type="NCBIfam" id="TIGR00392">
    <property type="entry name" value="ileS"/>
    <property type="match status" value="1"/>
</dbReference>
<dbReference type="PANTHER" id="PTHR42765:SF1">
    <property type="entry name" value="ISOLEUCINE--TRNA LIGASE, MITOCHONDRIAL"/>
    <property type="match status" value="1"/>
</dbReference>
<dbReference type="PANTHER" id="PTHR42765">
    <property type="entry name" value="SOLEUCYL-TRNA SYNTHETASE"/>
    <property type="match status" value="1"/>
</dbReference>
<dbReference type="Pfam" id="PF08264">
    <property type="entry name" value="Anticodon_1"/>
    <property type="match status" value="1"/>
</dbReference>
<dbReference type="Pfam" id="PF00133">
    <property type="entry name" value="tRNA-synt_1"/>
    <property type="match status" value="1"/>
</dbReference>
<dbReference type="Pfam" id="PF06827">
    <property type="entry name" value="zf-FPG_IleRS"/>
    <property type="match status" value="1"/>
</dbReference>
<dbReference type="PRINTS" id="PR00984">
    <property type="entry name" value="TRNASYNTHILE"/>
</dbReference>
<dbReference type="SUPFAM" id="SSF47323">
    <property type="entry name" value="Anticodon-binding domain of a subclass of class I aminoacyl-tRNA synthetases"/>
    <property type="match status" value="1"/>
</dbReference>
<dbReference type="SUPFAM" id="SSF52374">
    <property type="entry name" value="Nucleotidylyl transferase"/>
    <property type="match status" value="1"/>
</dbReference>
<dbReference type="SUPFAM" id="SSF50677">
    <property type="entry name" value="ValRS/IleRS/LeuRS editing domain"/>
    <property type="match status" value="1"/>
</dbReference>
<dbReference type="PROSITE" id="PS00178">
    <property type="entry name" value="AA_TRNA_LIGASE_I"/>
    <property type="match status" value="1"/>
</dbReference>
<feature type="chain" id="PRO_1000189213" description="Isoleucine--tRNA ligase">
    <location>
        <begin position="1"/>
        <end position="949"/>
    </location>
</feature>
<feature type="short sequence motif" description="'HIGH' region">
    <location>
        <begin position="58"/>
        <end position="68"/>
    </location>
</feature>
<feature type="short sequence motif" description="'KMSKS' region">
    <location>
        <begin position="608"/>
        <end position="612"/>
    </location>
</feature>
<feature type="binding site" evidence="1">
    <location>
        <position position="567"/>
    </location>
    <ligand>
        <name>L-isoleucyl-5'-AMP</name>
        <dbReference type="ChEBI" id="CHEBI:178002"/>
    </ligand>
</feature>
<feature type="binding site" evidence="1">
    <location>
        <position position="611"/>
    </location>
    <ligand>
        <name>ATP</name>
        <dbReference type="ChEBI" id="CHEBI:30616"/>
    </ligand>
</feature>
<feature type="binding site" evidence="1">
    <location>
        <position position="912"/>
    </location>
    <ligand>
        <name>Zn(2+)</name>
        <dbReference type="ChEBI" id="CHEBI:29105"/>
    </ligand>
</feature>
<feature type="binding site" evidence="1">
    <location>
        <position position="915"/>
    </location>
    <ligand>
        <name>Zn(2+)</name>
        <dbReference type="ChEBI" id="CHEBI:29105"/>
    </ligand>
</feature>
<feature type="binding site" evidence="1">
    <location>
        <position position="932"/>
    </location>
    <ligand>
        <name>Zn(2+)</name>
        <dbReference type="ChEBI" id="CHEBI:29105"/>
    </ligand>
</feature>
<feature type="binding site" evidence="1">
    <location>
        <position position="935"/>
    </location>
    <ligand>
        <name>Zn(2+)</name>
        <dbReference type="ChEBI" id="CHEBI:29105"/>
    </ligand>
</feature>